<comment type="function">
    <text evidence="1">Involved in the synthesis of meso-diaminopimelate (m-DAP or DL-DAP), required for both lysine and peptidoglycan biosynthesis. Catalyzes the direct conversion of tetrahydrodipicolinate to LL-diaminopimelate.</text>
</comment>
<comment type="catalytic activity">
    <reaction evidence="1">
        <text>(2S,6S)-2,6-diaminopimelate + 2-oxoglutarate = (S)-2,3,4,5-tetrahydrodipicolinate + L-glutamate + H2O + H(+)</text>
        <dbReference type="Rhea" id="RHEA:23988"/>
        <dbReference type="ChEBI" id="CHEBI:15377"/>
        <dbReference type="ChEBI" id="CHEBI:15378"/>
        <dbReference type="ChEBI" id="CHEBI:16810"/>
        <dbReference type="ChEBI" id="CHEBI:16845"/>
        <dbReference type="ChEBI" id="CHEBI:29985"/>
        <dbReference type="ChEBI" id="CHEBI:57609"/>
        <dbReference type="EC" id="2.6.1.83"/>
    </reaction>
</comment>
<comment type="cofactor">
    <cofactor evidence="1">
        <name>pyridoxal 5'-phosphate</name>
        <dbReference type="ChEBI" id="CHEBI:597326"/>
    </cofactor>
</comment>
<comment type="pathway">
    <text evidence="1">Amino-acid biosynthesis; L-lysine biosynthesis via DAP pathway; LL-2,6-diaminopimelate from (S)-tetrahydrodipicolinate (aminotransferase route): step 1/1.</text>
</comment>
<comment type="subunit">
    <text evidence="1">Homodimer.</text>
</comment>
<comment type="similarity">
    <text evidence="1">Belongs to the class-I pyridoxal-phosphate-dependent aminotransferase family. LL-diaminopimelate aminotransferase subfamily.</text>
</comment>
<feature type="chain" id="PRO_1000186862" description="LL-diaminopimelate aminotransferase">
    <location>
        <begin position="1"/>
        <end position="411"/>
    </location>
</feature>
<feature type="binding site" evidence="1">
    <location>
        <position position="15"/>
    </location>
    <ligand>
        <name>substrate</name>
    </ligand>
</feature>
<feature type="binding site" evidence="1">
    <location>
        <position position="42"/>
    </location>
    <ligand>
        <name>substrate</name>
    </ligand>
</feature>
<feature type="binding site" evidence="1">
    <location>
        <position position="72"/>
    </location>
    <ligand>
        <name>pyridoxal 5'-phosphate</name>
        <dbReference type="ChEBI" id="CHEBI:597326"/>
    </ligand>
</feature>
<feature type="binding site" evidence="1">
    <location>
        <begin position="108"/>
        <end position="109"/>
    </location>
    <ligand>
        <name>pyridoxal 5'-phosphate</name>
        <dbReference type="ChEBI" id="CHEBI:597326"/>
    </ligand>
</feature>
<feature type="binding site" evidence="1">
    <location>
        <position position="109"/>
    </location>
    <ligand>
        <name>substrate</name>
    </ligand>
</feature>
<feature type="binding site" evidence="1">
    <location>
        <position position="132"/>
    </location>
    <ligand>
        <name>pyridoxal 5'-phosphate</name>
        <dbReference type="ChEBI" id="CHEBI:597326"/>
    </ligand>
</feature>
<feature type="binding site" evidence="1">
    <location>
        <position position="132"/>
    </location>
    <ligand>
        <name>substrate</name>
    </ligand>
</feature>
<feature type="binding site" evidence="1">
    <location>
        <position position="187"/>
    </location>
    <ligand>
        <name>pyridoxal 5'-phosphate</name>
        <dbReference type="ChEBI" id="CHEBI:597326"/>
    </ligand>
</feature>
<feature type="binding site" evidence="1">
    <location>
        <position position="187"/>
    </location>
    <ligand>
        <name>substrate</name>
    </ligand>
</feature>
<feature type="binding site" evidence="1">
    <location>
        <position position="218"/>
    </location>
    <ligand>
        <name>pyridoxal 5'-phosphate</name>
        <dbReference type="ChEBI" id="CHEBI:597326"/>
    </ligand>
</feature>
<feature type="binding site" evidence="1">
    <location>
        <begin position="246"/>
        <end position="248"/>
    </location>
    <ligand>
        <name>pyridoxal 5'-phosphate</name>
        <dbReference type="ChEBI" id="CHEBI:597326"/>
    </ligand>
</feature>
<feature type="binding site" evidence="1">
    <location>
        <position position="257"/>
    </location>
    <ligand>
        <name>pyridoxal 5'-phosphate</name>
        <dbReference type="ChEBI" id="CHEBI:597326"/>
    </ligand>
</feature>
<feature type="binding site" evidence="1">
    <location>
        <position position="292"/>
    </location>
    <ligand>
        <name>pyridoxal 5'-phosphate</name>
        <dbReference type="ChEBI" id="CHEBI:597326"/>
    </ligand>
</feature>
<feature type="binding site" evidence="1">
    <location>
        <position position="292"/>
    </location>
    <ligand>
        <name>substrate</name>
    </ligand>
</feature>
<feature type="binding site" evidence="1">
    <location>
        <position position="388"/>
    </location>
    <ligand>
        <name>substrate</name>
    </ligand>
</feature>
<feature type="modified residue" description="N6-(pyridoxal phosphate)lysine" evidence="1">
    <location>
        <position position="249"/>
    </location>
</feature>
<sequence>MATINDNYLKLKAGYLFPEIARRVNAFAEAHPEAKIIKLGIGDVTEPLPQACRQAMIKAVEEMGDRATFKGYGPEQGYNWLREKIAQNDFQARGCDIDASEIFISDGSKCDTGNILDIFGKNNTIAVTDPVYPVYVDTNVMAGHTGDANDKGEYLGLVYLPMTANNNFTPELPSQKVDLIYLCFPNNPTGATATKENLTKWVNYAKENGSIIFFDAAYEAFITDPSLPHSIYEIEGARDCAIEFRSFSKNAGFTGTRCALTVVPKTLKAKASDGSEVELWKLWNRRQSTKFNGVSYIVQRGAEAVYSEEGQAQVKALVNFYLENAKIICDKLSFAGLTVYGGVNAPYVWVKTPDGLSSWDFFDKLLQSANVVGTPGSGFGAAGEGYFRISAFNSRENVEEATRRIIEKLTV</sequence>
<reference key="1">
    <citation type="journal article" date="2011" name="MBio">
        <title>Novel metabolic attributes of the genus Cyanothece, comprising a group of unicellular nitrogen-fixing Cyanobacteria.</title>
        <authorList>
            <person name="Bandyopadhyay A."/>
            <person name="Elvitigala T."/>
            <person name="Welsh E."/>
            <person name="Stockel J."/>
            <person name="Liberton M."/>
            <person name="Min H."/>
            <person name="Sherman L.A."/>
            <person name="Pakrasi H.B."/>
        </authorList>
    </citation>
    <scope>NUCLEOTIDE SEQUENCE [LARGE SCALE GENOMIC DNA]</scope>
    <source>
        <strain>PCC 7424</strain>
    </source>
</reference>
<protein>
    <recommendedName>
        <fullName evidence="1">LL-diaminopimelate aminotransferase</fullName>
        <shortName evidence="1">DAP-AT</shortName>
        <shortName evidence="1">DAP-aminotransferase</shortName>
        <shortName evidence="1">LL-DAP-aminotransferase</shortName>
        <ecNumber evidence="1">2.6.1.83</ecNumber>
    </recommendedName>
</protein>
<gene>
    <name evidence="1" type="primary">dapL</name>
    <name type="ordered locus">PCC7424_4059</name>
</gene>
<organism>
    <name type="scientific">Gloeothece citriformis (strain PCC 7424)</name>
    <name type="common">Cyanothece sp. (strain PCC 7424)</name>
    <dbReference type="NCBI Taxonomy" id="65393"/>
    <lineage>
        <taxon>Bacteria</taxon>
        <taxon>Bacillati</taxon>
        <taxon>Cyanobacteriota</taxon>
        <taxon>Cyanophyceae</taxon>
        <taxon>Oscillatoriophycideae</taxon>
        <taxon>Chroococcales</taxon>
        <taxon>Aphanothecaceae</taxon>
        <taxon>Gloeothece</taxon>
        <taxon>Gloeothece citriformis</taxon>
    </lineage>
</organism>
<evidence type="ECO:0000255" key="1">
    <source>
        <dbReference type="HAMAP-Rule" id="MF_01642"/>
    </source>
</evidence>
<name>DAPAT_GLOC7</name>
<proteinExistence type="inferred from homology"/>
<dbReference type="EC" id="2.6.1.83" evidence="1"/>
<dbReference type="EMBL" id="CP001291">
    <property type="protein sequence ID" value="ACK72433.1"/>
    <property type="molecule type" value="Genomic_DNA"/>
</dbReference>
<dbReference type="RefSeq" id="WP_015956018.1">
    <property type="nucleotide sequence ID" value="NC_011729.1"/>
</dbReference>
<dbReference type="SMR" id="B7KL61"/>
<dbReference type="STRING" id="65393.PCC7424_4059"/>
<dbReference type="KEGG" id="cyc:PCC7424_4059"/>
<dbReference type="eggNOG" id="COG0436">
    <property type="taxonomic scope" value="Bacteria"/>
</dbReference>
<dbReference type="HOGENOM" id="CLU_051433_0_0_3"/>
<dbReference type="OrthoDB" id="9802328at2"/>
<dbReference type="UniPathway" id="UPA00034">
    <property type="reaction ID" value="UER00466"/>
</dbReference>
<dbReference type="Proteomes" id="UP000002384">
    <property type="component" value="Chromosome"/>
</dbReference>
<dbReference type="GO" id="GO:0010285">
    <property type="term" value="F:L,L-diaminopimelate aminotransferase activity"/>
    <property type="evidence" value="ECO:0007669"/>
    <property type="project" value="UniProtKB-UniRule"/>
</dbReference>
<dbReference type="GO" id="GO:0030170">
    <property type="term" value="F:pyridoxal phosphate binding"/>
    <property type="evidence" value="ECO:0007669"/>
    <property type="project" value="UniProtKB-UniRule"/>
</dbReference>
<dbReference type="GO" id="GO:0033362">
    <property type="term" value="P:lysine biosynthetic process via diaminopimelate, diaminopimelate-aminotransferase pathway"/>
    <property type="evidence" value="ECO:0007669"/>
    <property type="project" value="UniProtKB-UniRule"/>
</dbReference>
<dbReference type="CDD" id="cd00609">
    <property type="entry name" value="AAT_like"/>
    <property type="match status" value="1"/>
</dbReference>
<dbReference type="FunFam" id="3.40.640.10:FF:000099">
    <property type="entry name" value="LL-diaminopimelate aminotransferase, chloroplastic"/>
    <property type="match status" value="1"/>
</dbReference>
<dbReference type="Gene3D" id="3.90.1150.10">
    <property type="entry name" value="Aspartate Aminotransferase, domain 1"/>
    <property type="match status" value="1"/>
</dbReference>
<dbReference type="Gene3D" id="3.40.640.10">
    <property type="entry name" value="Type I PLP-dependent aspartate aminotransferase-like (Major domain)"/>
    <property type="match status" value="1"/>
</dbReference>
<dbReference type="HAMAP" id="MF_01642">
    <property type="entry name" value="DapL_aminotrans_1"/>
    <property type="match status" value="1"/>
</dbReference>
<dbReference type="InterPro" id="IPR004839">
    <property type="entry name" value="Aminotransferase_I/II_large"/>
</dbReference>
<dbReference type="InterPro" id="IPR019942">
    <property type="entry name" value="DapL/ALD1"/>
</dbReference>
<dbReference type="InterPro" id="IPR015424">
    <property type="entry name" value="PyrdxlP-dep_Trfase"/>
</dbReference>
<dbReference type="InterPro" id="IPR015421">
    <property type="entry name" value="PyrdxlP-dep_Trfase_major"/>
</dbReference>
<dbReference type="InterPro" id="IPR015422">
    <property type="entry name" value="PyrdxlP-dep_Trfase_small"/>
</dbReference>
<dbReference type="NCBIfam" id="TIGR03542">
    <property type="entry name" value="DAPAT_plant"/>
    <property type="match status" value="1"/>
</dbReference>
<dbReference type="PANTHER" id="PTHR43144">
    <property type="entry name" value="AMINOTRANSFERASE"/>
    <property type="match status" value="1"/>
</dbReference>
<dbReference type="Pfam" id="PF00155">
    <property type="entry name" value="Aminotran_1_2"/>
    <property type="match status" value="1"/>
</dbReference>
<dbReference type="SUPFAM" id="SSF53383">
    <property type="entry name" value="PLP-dependent transferases"/>
    <property type="match status" value="1"/>
</dbReference>
<accession>B7KL61</accession>
<keyword id="KW-0032">Aminotransferase</keyword>
<keyword id="KW-0663">Pyridoxal phosphate</keyword>
<keyword id="KW-1185">Reference proteome</keyword>
<keyword id="KW-0808">Transferase</keyword>